<evidence type="ECO:0000255" key="1">
    <source>
        <dbReference type="HAMAP-Rule" id="MF_01366"/>
    </source>
</evidence>
<evidence type="ECO:0000256" key="2">
    <source>
        <dbReference type="SAM" id="MobiDB-lite"/>
    </source>
</evidence>
<evidence type="ECO:0000305" key="3"/>
<proteinExistence type="inferred from homology"/>
<gene>
    <name evidence="1" type="primary">rplM</name>
    <name type="ordered locus">RD1_2613</name>
</gene>
<reference key="1">
    <citation type="journal article" date="2007" name="J. Bacteriol.">
        <title>The complete genome sequence of Roseobacter denitrificans reveals a mixotrophic rather than photosynthetic metabolism.</title>
        <authorList>
            <person name="Swingley W.D."/>
            <person name="Sadekar S."/>
            <person name="Mastrian S.D."/>
            <person name="Matthies H.J."/>
            <person name="Hao J."/>
            <person name="Ramos H."/>
            <person name="Acharya C.R."/>
            <person name="Conrad A.L."/>
            <person name="Taylor H.L."/>
            <person name="Dejesa L.C."/>
            <person name="Shah M.K."/>
            <person name="O'Huallachain M.E."/>
            <person name="Lince M.T."/>
            <person name="Blankenship R.E."/>
            <person name="Beatty J.T."/>
            <person name="Touchman J.W."/>
        </authorList>
    </citation>
    <scope>NUCLEOTIDE SEQUENCE [LARGE SCALE GENOMIC DNA]</scope>
    <source>
        <strain>ATCC 33942 / OCh 114</strain>
    </source>
</reference>
<protein>
    <recommendedName>
        <fullName evidence="1">Large ribosomal subunit protein uL13</fullName>
    </recommendedName>
    <alternativeName>
        <fullName evidence="3">50S ribosomal protein L13</fullName>
    </alternativeName>
</protein>
<comment type="function">
    <text evidence="1">This protein is one of the early assembly proteins of the 50S ribosomal subunit, although it is not seen to bind rRNA by itself. It is important during the early stages of 50S assembly.</text>
</comment>
<comment type="subunit">
    <text evidence="1">Part of the 50S ribosomal subunit.</text>
</comment>
<comment type="similarity">
    <text evidence="1">Belongs to the universal ribosomal protein uL13 family.</text>
</comment>
<name>RL13_ROSDO</name>
<sequence>MKTFSATPADIDKKWILIDAEGVVLGRLASIVATRLRGKHKPSFTPHMDCGDNVVIINADKVQLTGKKREESHYWHTGHPGGIKSRTKAQILEGKHPERIVTLAVKRMLPGNRLSRQIMTNLRVYAGSEHPHEAQSPEVLDVTSMNSKNTRSA</sequence>
<keyword id="KW-1185">Reference proteome</keyword>
<keyword id="KW-0687">Ribonucleoprotein</keyword>
<keyword id="KW-0689">Ribosomal protein</keyword>
<feature type="chain" id="PRO_0000261787" description="Large ribosomal subunit protein uL13">
    <location>
        <begin position="1"/>
        <end position="153"/>
    </location>
</feature>
<feature type="region of interest" description="Disordered" evidence="2">
    <location>
        <begin position="128"/>
        <end position="153"/>
    </location>
</feature>
<feature type="compositionally biased region" description="Polar residues" evidence="2">
    <location>
        <begin position="143"/>
        <end position="153"/>
    </location>
</feature>
<accession>Q166D0</accession>
<organism>
    <name type="scientific">Roseobacter denitrificans (strain ATCC 33942 / OCh 114)</name>
    <name type="common">Erythrobacter sp. (strain OCh 114)</name>
    <name type="synonym">Roseobacter denitrificans</name>
    <dbReference type="NCBI Taxonomy" id="375451"/>
    <lineage>
        <taxon>Bacteria</taxon>
        <taxon>Pseudomonadati</taxon>
        <taxon>Pseudomonadota</taxon>
        <taxon>Alphaproteobacteria</taxon>
        <taxon>Rhodobacterales</taxon>
        <taxon>Roseobacteraceae</taxon>
        <taxon>Roseobacter</taxon>
    </lineage>
</organism>
<dbReference type="EMBL" id="CP000362">
    <property type="protein sequence ID" value="ABG32163.1"/>
    <property type="molecule type" value="Genomic_DNA"/>
</dbReference>
<dbReference type="RefSeq" id="WP_011568780.1">
    <property type="nucleotide sequence ID" value="NC_008209.1"/>
</dbReference>
<dbReference type="SMR" id="Q166D0"/>
<dbReference type="STRING" id="375451.RD1_2613"/>
<dbReference type="KEGG" id="rde:RD1_2613"/>
<dbReference type="eggNOG" id="COG0102">
    <property type="taxonomic scope" value="Bacteria"/>
</dbReference>
<dbReference type="HOGENOM" id="CLU_082184_2_0_5"/>
<dbReference type="OrthoDB" id="9801330at2"/>
<dbReference type="Proteomes" id="UP000007029">
    <property type="component" value="Chromosome"/>
</dbReference>
<dbReference type="GO" id="GO:0022625">
    <property type="term" value="C:cytosolic large ribosomal subunit"/>
    <property type="evidence" value="ECO:0007669"/>
    <property type="project" value="TreeGrafter"/>
</dbReference>
<dbReference type="GO" id="GO:0003729">
    <property type="term" value="F:mRNA binding"/>
    <property type="evidence" value="ECO:0007669"/>
    <property type="project" value="TreeGrafter"/>
</dbReference>
<dbReference type="GO" id="GO:0003735">
    <property type="term" value="F:structural constituent of ribosome"/>
    <property type="evidence" value="ECO:0007669"/>
    <property type="project" value="InterPro"/>
</dbReference>
<dbReference type="GO" id="GO:0017148">
    <property type="term" value="P:negative regulation of translation"/>
    <property type="evidence" value="ECO:0007669"/>
    <property type="project" value="TreeGrafter"/>
</dbReference>
<dbReference type="GO" id="GO:0006412">
    <property type="term" value="P:translation"/>
    <property type="evidence" value="ECO:0007669"/>
    <property type="project" value="UniProtKB-UniRule"/>
</dbReference>
<dbReference type="CDD" id="cd00392">
    <property type="entry name" value="Ribosomal_L13"/>
    <property type="match status" value="1"/>
</dbReference>
<dbReference type="FunFam" id="3.90.1180.10:FF:000001">
    <property type="entry name" value="50S ribosomal protein L13"/>
    <property type="match status" value="1"/>
</dbReference>
<dbReference type="Gene3D" id="3.90.1180.10">
    <property type="entry name" value="Ribosomal protein L13"/>
    <property type="match status" value="1"/>
</dbReference>
<dbReference type="HAMAP" id="MF_01366">
    <property type="entry name" value="Ribosomal_uL13"/>
    <property type="match status" value="1"/>
</dbReference>
<dbReference type="InterPro" id="IPR005822">
    <property type="entry name" value="Ribosomal_uL13"/>
</dbReference>
<dbReference type="InterPro" id="IPR005823">
    <property type="entry name" value="Ribosomal_uL13_bac-type"/>
</dbReference>
<dbReference type="InterPro" id="IPR023563">
    <property type="entry name" value="Ribosomal_uL13_CS"/>
</dbReference>
<dbReference type="InterPro" id="IPR036899">
    <property type="entry name" value="Ribosomal_uL13_sf"/>
</dbReference>
<dbReference type="NCBIfam" id="TIGR01066">
    <property type="entry name" value="rplM_bact"/>
    <property type="match status" value="1"/>
</dbReference>
<dbReference type="PANTHER" id="PTHR11545:SF2">
    <property type="entry name" value="LARGE RIBOSOMAL SUBUNIT PROTEIN UL13M"/>
    <property type="match status" value="1"/>
</dbReference>
<dbReference type="PANTHER" id="PTHR11545">
    <property type="entry name" value="RIBOSOMAL PROTEIN L13"/>
    <property type="match status" value="1"/>
</dbReference>
<dbReference type="Pfam" id="PF00572">
    <property type="entry name" value="Ribosomal_L13"/>
    <property type="match status" value="1"/>
</dbReference>
<dbReference type="PIRSF" id="PIRSF002181">
    <property type="entry name" value="Ribosomal_L13"/>
    <property type="match status" value="1"/>
</dbReference>
<dbReference type="SUPFAM" id="SSF52161">
    <property type="entry name" value="Ribosomal protein L13"/>
    <property type="match status" value="1"/>
</dbReference>
<dbReference type="PROSITE" id="PS00783">
    <property type="entry name" value="RIBOSOMAL_L13"/>
    <property type="match status" value="1"/>
</dbReference>